<dbReference type="EMBL" id="DS028144">
    <property type="protein sequence ID" value="EEY60333.1"/>
    <property type="molecule type" value="Genomic_DNA"/>
</dbReference>
<dbReference type="RefSeq" id="XP_002900129.1">
    <property type="nucleotide sequence ID" value="XM_002900083.1"/>
</dbReference>
<dbReference type="SMR" id="D0NL15"/>
<dbReference type="STRING" id="403677.D0NL15"/>
<dbReference type="EnsemblProtists" id="PITG_12737T0">
    <property type="protein sequence ID" value="PITG_12737T0"/>
    <property type="gene ID" value="PITG_12737"/>
</dbReference>
<dbReference type="GeneID" id="9478065"/>
<dbReference type="KEGG" id="pif:PITG_12737"/>
<dbReference type="VEuPathDB" id="FungiDB:PITG_12737"/>
<dbReference type="eggNOG" id="ENOG502RGTF">
    <property type="taxonomic scope" value="Eukaryota"/>
</dbReference>
<dbReference type="HOGENOM" id="CLU_1589632_0_0_1"/>
<dbReference type="InParanoid" id="D0NL15"/>
<dbReference type="OMA" id="MEDFTFY"/>
<dbReference type="Proteomes" id="UP000006643">
    <property type="component" value="Partially assembled WGS sequence"/>
</dbReference>
<dbReference type="GO" id="GO:0005576">
    <property type="term" value="C:extracellular region"/>
    <property type="evidence" value="ECO:0007669"/>
    <property type="project" value="UniProtKB-SubCell"/>
</dbReference>
<dbReference type="GO" id="GO:0030430">
    <property type="term" value="C:host cell cytoplasm"/>
    <property type="evidence" value="ECO:0007669"/>
    <property type="project" value="UniProtKB-SubCell"/>
</dbReference>
<dbReference type="GO" id="GO:0042025">
    <property type="term" value="C:host cell nucleus"/>
    <property type="evidence" value="ECO:0007669"/>
    <property type="project" value="UniProtKB-SubCell"/>
</dbReference>
<reference key="1">
    <citation type="journal article" date="2009" name="Nature">
        <title>Genome sequence and analysis of the Irish potato famine pathogen Phytophthora infestans.</title>
        <authorList>
            <consortium name="The Broad Institute Genome Sequencing Platform"/>
            <person name="Haas B.J."/>
            <person name="Kamoun S."/>
            <person name="Zody M.C."/>
            <person name="Jiang R.H."/>
            <person name="Handsaker R.E."/>
            <person name="Cano L.M."/>
            <person name="Grabherr M."/>
            <person name="Kodira C.D."/>
            <person name="Raffaele S."/>
            <person name="Torto-Alalibo T."/>
            <person name="Bozkurt T.O."/>
            <person name="Ah-Fong A.M."/>
            <person name="Alvarado L."/>
            <person name="Anderson V.L."/>
            <person name="Armstrong M.R."/>
            <person name="Avrova A."/>
            <person name="Baxter L."/>
            <person name="Beynon J."/>
            <person name="Boevink P.C."/>
            <person name="Bollmann S.R."/>
            <person name="Bos J.I."/>
            <person name="Bulone V."/>
            <person name="Cai G."/>
            <person name="Cakir C."/>
            <person name="Carrington J.C."/>
            <person name="Chawner M."/>
            <person name="Conti L."/>
            <person name="Costanzo S."/>
            <person name="Ewan R."/>
            <person name="Fahlgren N."/>
            <person name="Fischbach M.A."/>
            <person name="Fugelstad J."/>
            <person name="Gilroy E.M."/>
            <person name="Gnerre S."/>
            <person name="Green P.J."/>
            <person name="Grenville-Briggs L.J."/>
            <person name="Griffith J."/>
            <person name="Grunwald N.J."/>
            <person name="Horn K."/>
            <person name="Horner N.R."/>
            <person name="Hu C.H."/>
            <person name="Huitema E."/>
            <person name="Jeong D.H."/>
            <person name="Jones A.M."/>
            <person name="Jones J.D."/>
            <person name="Jones R.W."/>
            <person name="Karlsson E.K."/>
            <person name="Kunjeti S.G."/>
            <person name="Lamour K."/>
            <person name="Liu Z."/>
            <person name="Ma L."/>
            <person name="Maclean D."/>
            <person name="Chibucos M.C."/>
            <person name="McDonald H."/>
            <person name="McWalters J."/>
            <person name="Meijer H.J."/>
            <person name="Morgan W."/>
            <person name="Morris P.F."/>
            <person name="Munro C.A."/>
            <person name="O'Neill K."/>
            <person name="Ospina-Giraldo M."/>
            <person name="Pinzon A."/>
            <person name="Pritchard L."/>
            <person name="Ramsahoye B."/>
            <person name="Ren Q."/>
            <person name="Restrepo S."/>
            <person name="Roy S."/>
            <person name="Sadanandom A."/>
            <person name="Savidor A."/>
            <person name="Schornack S."/>
            <person name="Schwartz D.C."/>
            <person name="Schumann U.D."/>
            <person name="Schwessinger B."/>
            <person name="Seyer L."/>
            <person name="Sharpe T."/>
            <person name="Silvar C."/>
            <person name="Song J."/>
            <person name="Studholme D.J."/>
            <person name="Sykes S."/>
            <person name="Thines M."/>
            <person name="van de Vondervoort P.J."/>
            <person name="Phuntumart V."/>
            <person name="Wawra S."/>
            <person name="Weide R."/>
            <person name="Win J."/>
            <person name="Young C."/>
            <person name="Zhou S."/>
            <person name="Fry W."/>
            <person name="Meyers B.C."/>
            <person name="van West P."/>
            <person name="Ristaino J."/>
            <person name="Govers F."/>
            <person name="Birch P.R."/>
            <person name="Whisson S.C."/>
            <person name="Judelson H.S."/>
            <person name="Nusbaum C."/>
        </authorList>
    </citation>
    <scope>NUCLEOTIDE SEQUENCE [LARGE SCALE GENOMIC DNA]</scope>
    <scope>INDUCTION</scope>
    <source>
        <strain>T30-4</strain>
    </source>
</reference>
<reference key="2">
    <citation type="journal article" date="2017" name="BMC Genomics">
        <title>RNA-seq of life stages of the oomycete Phytophthora infestans reveals dynamic changes in metabolic, signal transduction, and pathogenesis genes and a major role for calcium signaling in development.</title>
        <authorList>
            <person name="Ah-Fong A.M."/>
            <person name="Kim K.S."/>
            <person name="Judelson H.S."/>
        </authorList>
    </citation>
    <scope>INDUCTION</scope>
</reference>
<reference key="3">
    <citation type="journal article" date="2017" name="Front. Plant Sci.">
        <title>Conserved RXLR effector genes of Phytophthora infestans expressed at the early stage of potato infection are suppressive to host defense.</title>
        <authorList>
            <person name="Yin J."/>
            <person name="Gu B."/>
            <person name="Huang G."/>
            <person name="Tian Y."/>
            <person name="Quan J."/>
            <person name="Lindqvist-Kreuze H."/>
            <person name="Shan W."/>
        </authorList>
    </citation>
    <scope>INDUCTION</scope>
    <scope>DOMAIN</scope>
</reference>
<reference key="4">
    <citation type="journal article" date="2019" name="J. Exp. Bot.">
        <title>Phytophthora infestans RXLR effectors act in concert at diverse subcellular locations to enhance host colonization.</title>
        <authorList>
            <person name="Wang S."/>
            <person name="McLellan H."/>
            <person name="Bukharova T."/>
            <person name="He Q."/>
            <person name="Murphy F."/>
            <person name="Shi J."/>
            <person name="Sun S."/>
            <person name="van Weymers P."/>
            <person name="Ren Y."/>
            <person name="Thilliez G."/>
            <person name="Wang H."/>
            <person name="Chen X."/>
            <person name="Engelhardt S."/>
            <person name="Vleeshouwers V."/>
            <person name="Gilroy E.M."/>
            <person name="Whisson S.C."/>
            <person name="Hein I."/>
            <person name="Wang X."/>
            <person name="Tian Z."/>
            <person name="Birch P.R.J."/>
            <person name="Boevink P.C."/>
        </authorList>
    </citation>
    <scope>FUNCTION</scope>
    <scope>SUBCELLULAR LOCATION</scope>
</reference>
<protein>
    <recommendedName>
        <fullName evidence="6">RxLR effector protein PITG_12737</fullName>
    </recommendedName>
</protein>
<proteinExistence type="evidence at transcript level"/>
<feature type="signal peptide" evidence="1">
    <location>
        <begin position="1"/>
        <end position="20"/>
    </location>
</feature>
<feature type="chain" id="PRO_5003012809" description="RxLR effector protein PITG_12737">
    <location>
        <begin position="21"/>
        <end position="168"/>
    </location>
</feature>
<feature type="short sequence motif" description="RxLR-dEER" evidence="8">
    <location>
        <begin position="54"/>
        <end position="77"/>
    </location>
</feature>
<evidence type="ECO:0000255" key="1"/>
<evidence type="ECO:0000269" key="2">
    <source>
    </source>
</evidence>
<evidence type="ECO:0000269" key="3">
    <source>
    </source>
</evidence>
<evidence type="ECO:0000269" key="4">
    <source>
    </source>
</evidence>
<evidence type="ECO:0000269" key="5">
    <source>
    </source>
</evidence>
<evidence type="ECO:0000303" key="6">
    <source>
    </source>
</evidence>
<evidence type="ECO:0000305" key="7"/>
<evidence type="ECO:0000305" key="8">
    <source>
    </source>
</evidence>
<keyword id="KW-1035">Host cytoplasm</keyword>
<keyword id="KW-1048">Host nucleus</keyword>
<keyword id="KW-1185">Reference proteome</keyword>
<keyword id="KW-0964">Secreted</keyword>
<keyword id="KW-0732">Signal</keyword>
<keyword id="KW-0843">Virulence</keyword>
<sequence length="168" mass="18737">MRACAILVVAAAAVLTGSTAISSTDALELATLSKTAQDVELSSVAAQPRSNIQRRLRKHKTVNTNSEMEYESEAEARGLVPEKLTNLVNKFKKVGGEVMLKTKSLNQLKKLSEKMEEKSLYALTDLEKKGYTPETLRDAIKNTPPKGMKDADADELIKFYDEYWKIFH</sequence>
<gene>
    <name type="ORF">PITG_12737</name>
</gene>
<comment type="function">
    <text evidence="5">Effector that enhances P.infestans colonization of Nicotiana benthamiana leaves.</text>
</comment>
<comment type="subcellular location">
    <subcellularLocation>
        <location evidence="5">Secreted</location>
    </subcellularLocation>
    <subcellularLocation>
        <location evidence="5">Host nucleus</location>
    </subcellularLocation>
    <subcellularLocation>
        <location evidence="5">Host cytoplasm</location>
    </subcellularLocation>
</comment>
<comment type="induction">
    <text evidence="2 3 4">Expression is induced during host plant infection.</text>
</comment>
<comment type="domain">
    <text evidence="8">The RxLR-dEER motif acts to carry the protein into the host cell cytoplasm through binding to cell surface phosphatidylinositol-3-phosphate.</text>
</comment>
<comment type="similarity">
    <text evidence="7">Belongs to the RxLR effector family.</text>
</comment>
<name>RXLRL_PHYIT</name>
<organism>
    <name type="scientific">Phytophthora infestans (strain T30-4)</name>
    <name type="common">Potato late blight agent</name>
    <dbReference type="NCBI Taxonomy" id="403677"/>
    <lineage>
        <taxon>Eukaryota</taxon>
        <taxon>Sar</taxon>
        <taxon>Stramenopiles</taxon>
        <taxon>Oomycota</taxon>
        <taxon>Peronosporales</taxon>
        <taxon>Peronosporaceae</taxon>
        <taxon>Phytophthora</taxon>
    </lineage>
</organism>
<accession>D0NL15</accession>